<protein>
    <recommendedName>
        <fullName evidence="1">Peptidase T</fullName>
        <ecNumber evidence="1">3.4.11.4</ecNumber>
    </recommendedName>
    <alternativeName>
        <fullName evidence="1">Aminotripeptidase</fullName>
        <shortName evidence="1">Tripeptidase</shortName>
    </alternativeName>
    <alternativeName>
        <fullName evidence="1">Tripeptide aminopeptidase</fullName>
    </alternativeName>
</protein>
<accession>Q732Y5</accession>
<evidence type="ECO:0000255" key="1">
    <source>
        <dbReference type="HAMAP-Rule" id="MF_00550"/>
    </source>
</evidence>
<proteinExistence type="inferred from homology"/>
<sequence>MKQELIERFTRYVKIDTQSNEESHTVPTTPGQIEFGKLLVEELKEIGLTEVTMDDNGYVMATLPANTDKDVPVIGFLAHLDTATDFTGKNVKPQIHENFDGNAITLNEELNVVLTPEQFPELPSYKGHTIITTDGTTLLGADDKAGLTEIMVAMNYLVHNPQIKHGKIRVAFTPDEEIGRGPAHFDVEAFGASFAYTMDGGPLGGLEYESFNAAGAKLTFNGTNTHPGTAKNKMRNATKLAMEFNGYLPVEEAPEYTEGYEGFYHLLSLNGDVEQSKAYYIIRDFDRENFEARKHNVENIVKQMQEKYGQDAVVLEMNDQYYNMLEKIEPVREIVDIAYEAMKSLNIEPNIHPIRGGTDGSQLSYMGLPTPNIFTGGENYHGKFEYVSVDVMEKAVQVIVEIARRFEEQA</sequence>
<gene>
    <name evidence="1" type="primary">pepT</name>
    <name type="ordered locus">BCE_3775</name>
</gene>
<organism>
    <name type="scientific">Bacillus cereus (strain ATCC 10987 / NRS 248)</name>
    <dbReference type="NCBI Taxonomy" id="222523"/>
    <lineage>
        <taxon>Bacteria</taxon>
        <taxon>Bacillati</taxon>
        <taxon>Bacillota</taxon>
        <taxon>Bacilli</taxon>
        <taxon>Bacillales</taxon>
        <taxon>Bacillaceae</taxon>
        <taxon>Bacillus</taxon>
        <taxon>Bacillus cereus group</taxon>
    </lineage>
</organism>
<feature type="chain" id="PRO_0000185278" description="Peptidase T">
    <location>
        <begin position="1"/>
        <end position="410"/>
    </location>
</feature>
<feature type="active site" evidence="1">
    <location>
        <position position="81"/>
    </location>
</feature>
<feature type="active site" description="Proton acceptor" evidence="1">
    <location>
        <position position="176"/>
    </location>
</feature>
<feature type="binding site" evidence="1">
    <location>
        <position position="79"/>
    </location>
    <ligand>
        <name>Zn(2+)</name>
        <dbReference type="ChEBI" id="CHEBI:29105"/>
        <label>1</label>
    </ligand>
</feature>
<feature type="binding site" evidence="1">
    <location>
        <position position="142"/>
    </location>
    <ligand>
        <name>Zn(2+)</name>
        <dbReference type="ChEBI" id="CHEBI:29105"/>
        <label>1</label>
    </ligand>
</feature>
<feature type="binding site" evidence="1">
    <location>
        <position position="142"/>
    </location>
    <ligand>
        <name>Zn(2+)</name>
        <dbReference type="ChEBI" id="CHEBI:29105"/>
        <label>2</label>
    </ligand>
</feature>
<feature type="binding site" evidence="1">
    <location>
        <position position="177"/>
    </location>
    <ligand>
        <name>Zn(2+)</name>
        <dbReference type="ChEBI" id="CHEBI:29105"/>
        <label>2</label>
    </ligand>
</feature>
<feature type="binding site" evidence="1">
    <location>
        <position position="199"/>
    </location>
    <ligand>
        <name>Zn(2+)</name>
        <dbReference type="ChEBI" id="CHEBI:29105"/>
        <label>1</label>
    </ligand>
</feature>
<feature type="binding site" evidence="1">
    <location>
        <position position="381"/>
    </location>
    <ligand>
        <name>Zn(2+)</name>
        <dbReference type="ChEBI" id="CHEBI:29105"/>
        <label>2</label>
    </ligand>
</feature>
<name>PEPT_BACC1</name>
<keyword id="KW-0031">Aminopeptidase</keyword>
<keyword id="KW-0963">Cytoplasm</keyword>
<keyword id="KW-0378">Hydrolase</keyword>
<keyword id="KW-0479">Metal-binding</keyword>
<keyword id="KW-0482">Metalloprotease</keyword>
<keyword id="KW-0645">Protease</keyword>
<keyword id="KW-0862">Zinc</keyword>
<dbReference type="EC" id="3.4.11.4" evidence="1"/>
<dbReference type="EMBL" id="AE017194">
    <property type="protein sequence ID" value="AAS42680.1"/>
    <property type="molecule type" value="Genomic_DNA"/>
</dbReference>
<dbReference type="SMR" id="Q732Y5"/>
<dbReference type="MEROPS" id="M20.003"/>
<dbReference type="KEGG" id="bca:BCE_3775"/>
<dbReference type="HOGENOM" id="CLU_053676_0_0_9"/>
<dbReference type="Proteomes" id="UP000002527">
    <property type="component" value="Chromosome"/>
</dbReference>
<dbReference type="GO" id="GO:0005829">
    <property type="term" value="C:cytosol"/>
    <property type="evidence" value="ECO:0007669"/>
    <property type="project" value="TreeGrafter"/>
</dbReference>
<dbReference type="GO" id="GO:0008237">
    <property type="term" value="F:metallopeptidase activity"/>
    <property type="evidence" value="ECO:0007669"/>
    <property type="project" value="UniProtKB-KW"/>
</dbReference>
<dbReference type="GO" id="GO:0045148">
    <property type="term" value="F:tripeptide aminopeptidase activity"/>
    <property type="evidence" value="ECO:0007669"/>
    <property type="project" value="UniProtKB-UniRule"/>
</dbReference>
<dbReference type="GO" id="GO:0008270">
    <property type="term" value="F:zinc ion binding"/>
    <property type="evidence" value="ECO:0007669"/>
    <property type="project" value="UniProtKB-UniRule"/>
</dbReference>
<dbReference type="GO" id="GO:0043171">
    <property type="term" value="P:peptide catabolic process"/>
    <property type="evidence" value="ECO:0007669"/>
    <property type="project" value="UniProtKB-UniRule"/>
</dbReference>
<dbReference type="GO" id="GO:0006508">
    <property type="term" value="P:proteolysis"/>
    <property type="evidence" value="ECO:0007669"/>
    <property type="project" value="UniProtKB-UniRule"/>
</dbReference>
<dbReference type="CDD" id="cd03892">
    <property type="entry name" value="M20_peptT"/>
    <property type="match status" value="1"/>
</dbReference>
<dbReference type="FunFam" id="3.30.70.360:FF:000002">
    <property type="entry name" value="Peptidase T"/>
    <property type="match status" value="1"/>
</dbReference>
<dbReference type="Gene3D" id="3.30.70.360">
    <property type="match status" value="1"/>
</dbReference>
<dbReference type="Gene3D" id="3.40.630.10">
    <property type="entry name" value="Zn peptidases"/>
    <property type="match status" value="1"/>
</dbReference>
<dbReference type="HAMAP" id="MF_00550">
    <property type="entry name" value="Aminopeptidase_M20"/>
    <property type="match status" value="1"/>
</dbReference>
<dbReference type="InterPro" id="IPR001261">
    <property type="entry name" value="ArgE/DapE_CS"/>
</dbReference>
<dbReference type="InterPro" id="IPR036264">
    <property type="entry name" value="Bact_exopeptidase_dim_dom"/>
</dbReference>
<dbReference type="InterPro" id="IPR002933">
    <property type="entry name" value="Peptidase_M20"/>
</dbReference>
<dbReference type="InterPro" id="IPR011650">
    <property type="entry name" value="Peptidase_M20_dimer"/>
</dbReference>
<dbReference type="InterPro" id="IPR010161">
    <property type="entry name" value="Peptidase_M20B"/>
</dbReference>
<dbReference type="NCBIfam" id="TIGR01882">
    <property type="entry name" value="peptidase-T"/>
    <property type="match status" value="1"/>
</dbReference>
<dbReference type="NCBIfam" id="NF003976">
    <property type="entry name" value="PRK05469.1"/>
    <property type="match status" value="1"/>
</dbReference>
<dbReference type="NCBIfam" id="NF009920">
    <property type="entry name" value="PRK13381.1"/>
    <property type="match status" value="1"/>
</dbReference>
<dbReference type="PANTHER" id="PTHR42994">
    <property type="entry name" value="PEPTIDASE T"/>
    <property type="match status" value="1"/>
</dbReference>
<dbReference type="PANTHER" id="PTHR42994:SF1">
    <property type="entry name" value="PEPTIDASE T"/>
    <property type="match status" value="1"/>
</dbReference>
<dbReference type="Pfam" id="PF07687">
    <property type="entry name" value="M20_dimer"/>
    <property type="match status" value="1"/>
</dbReference>
<dbReference type="Pfam" id="PF01546">
    <property type="entry name" value="Peptidase_M20"/>
    <property type="match status" value="1"/>
</dbReference>
<dbReference type="PIRSF" id="PIRSF037215">
    <property type="entry name" value="Peptidase_M20B"/>
    <property type="match status" value="1"/>
</dbReference>
<dbReference type="SUPFAM" id="SSF55031">
    <property type="entry name" value="Bacterial exopeptidase dimerisation domain"/>
    <property type="match status" value="1"/>
</dbReference>
<dbReference type="SUPFAM" id="SSF53187">
    <property type="entry name" value="Zn-dependent exopeptidases"/>
    <property type="match status" value="1"/>
</dbReference>
<dbReference type="PROSITE" id="PS00758">
    <property type="entry name" value="ARGE_DAPE_CPG2_1"/>
    <property type="match status" value="1"/>
</dbReference>
<dbReference type="PROSITE" id="PS00759">
    <property type="entry name" value="ARGE_DAPE_CPG2_2"/>
    <property type="match status" value="1"/>
</dbReference>
<comment type="function">
    <text evidence="1">Cleaves the N-terminal amino acid of tripeptides.</text>
</comment>
<comment type="catalytic activity">
    <reaction evidence="1">
        <text>Release of the N-terminal residue from a tripeptide.</text>
        <dbReference type="EC" id="3.4.11.4"/>
    </reaction>
</comment>
<comment type="cofactor">
    <cofactor evidence="1">
        <name>Zn(2+)</name>
        <dbReference type="ChEBI" id="CHEBI:29105"/>
    </cofactor>
    <text evidence="1">Binds 2 Zn(2+) ions per subunit.</text>
</comment>
<comment type="subcellular location">
    <subcellularLocation>
        <location evidence="1">Cytoplasm</location>
    </subcellularLocation>
</comment>
<comment type="similarity">
    <text evidence="1">Belongs to the peptidase M20B family.</text>
</comment>
<reference key="1">
    <citation type="journal article" date="2004" name="Nucleic Acids Res.">
        <title>The genome sequence of Bacillus cereus ATCC 10987 reveals metabolic adaptations and a large plasmid related to Bacillus anthracis pXO1.</title>
        <authorList>
            <person name="Rasko D.A."/>
            <person name="Ravel J."/>
            <person name="Oekstad O.A."/>
            <person name="Helgason E."/>
            <person name="Cer R.Z."/>
            <person name="Jiang L."/>
            <person name="Shores K.A."/>
            <person name="Fouts D.E."/>
            <person name="Tourasse N.J."/>
            <person name="Angiuoli S.V."/>
            <person name="Kolonay J.F."/>
            <person name="Nelson W.C."/>
            <person name="Kolstoe A.-B."/>
            <person name="Fraser C.M."/>
            <person name="Read T.D."/>
        </authorList>
    </citation>
    <scope>NUCLEOTIDE SEQUENCE [LARGE SCALE GENOMIC DNA]</scope>
    <source>
        <strain>ATCC 10987 / NRS 248</strain>
    </source>
</reference>